<comment type="function">
    <text evidence="1">Forms a portal in the viral capsid through which viral DNA is translocated during DNA packaging. Assembles as a dodecamer at a single fivefold axe of the T=16 icosahedric capsid. Binds to the molecular motor that translocates the viral DNA, termed terminase.</text>
</comment>
<comment type="subunit">
    <text evidence="1">Homododecamerizes. Interacts with terminase subunits TRM1 and TRM3.</text>
</comment>
<comment type="subcellular location">
    <subcellularLocation>
        <location evidence="1">Virion</location>
    </subcellularLocation>
    <subcellularLocation>
        <location evidence="1">Host nucleus</location>
    </subcellularLocation>
</comment>
<comment type="similarity">
    <text evidence="1">Belongs to the herpesviridae portal protein family.</text>
</comment>
<sequence>MAAQRARAPAMRTRGGDAALCAPEDGWVKVHPTPGTMLFREILLGQMGYTEGQGVYNVVRSSEAATRQLQAAIFHALLNATTYRDLEEDWRRHVVARGLQPQRLVRRYRNAREGDIAGVAERVFDTWRCTLRTTLLDFAHGVVDCFAPGGPSGPTSFPKYIDWLTCLGLVPILRKTREGEATQRLGAFLRQHTLPRQLATVAGAAERAGPGLLDLAVAFDSTRMAEYDRVHIYYNHRRGEWLVRDPVSGQRGECLVLCPPLWTGDRLVFDSPVQRLCPEIVACHALREHAHICRLRNTASVKVLLGRKSDSERGVAGAARVVNKALGEDDETKAGSAASRLVRLIINMKGMRHVGDINDTVRAYLDEAGGHLIDTPAVDHTLPGFGKGGTGRGSRPQDPGARPQQLRQAFQTAVVNNINGMLEGYINNLFGTIERLRETNAGLATQLQARDRELRRAQAGALEREQRAADRAAGGGAGRPAEADLLRADYDIIDVSKSMDDDTYVANSFQHQYIPAYGQDLERLSRLWEHELVRCFKILRHRNKQGQETSISYSSGAIASFVAPYFEYVLRAPRAGALITGSDVILGEEELWEAVFKKTRLQTYLTDVAALFVADVQHAALPRPPSPTPADFRASASPRGGSRSRTRTRSRSPGRTPRGAPDQGWGVERRDGRPHARR</sequence>
<proteinExistence type="inferred from homology"/>
<keyword id="KW-1015">Disulfide bond</keyword>
<keyword id="KW-1048">Host nucleus</keyword>
<keyword id="KW-1185">Reference proteome</keyword>
<keyword id="KW-0231">Viral genome packaging</keyword>
<keyword id="KW-1188">Viral release from host cell</keyword>
<keyword id="KW-0946">Virion</keyword>
<gene>
    <name type="primary">UL6</name>
</gene>
<feature type="chain" id="PRO_0000115904" description="Portal protein">
    <location>
        <begin position="1"/>
        <end position="678"/>
    </location>
</feature>
<feature type="region of interest" description="Disordered" evidence="2">
    <location>
        <begin position="376"/>
        <end position="405"/>
    </location>
</feature>
<feature type="region of interest" description="Putative leucine zipper motif" evidence="1">
    <location>
        <begin position="422"/>
        <end position="443"/>
    </location>
</feature>
<feature type="region of interest" description="Disordered" evidence="2">
    <location>
        <begin position="459"/>
        <end position="480"/>
    </location>
</feature>
<feature type="region of interest" description="Disordered" evidence="2">
    <location>
        <begin position="622"/>
        <end position="678"/>
    </location>
</feature>
<feature type="compositionally biased region" description="Basic and acidic residues" evidence="2">
    <location>
        <begin position="459"/>
        <end position="470"/>
    </location>
</feature>
<feature type="compositionally biased region" description="Basic residues" evidence="2">
    <location>
        <begin position="642"/>
        <end position="652"/>
    </location>
</feature>
<feature type="compositionally biased region" description="Basic and acidic residues" evidence="2">
    <location>
        <begin position="667"/>
        <end position="678"/>
    </location>
</feature>
<feature type="disulfide bond" description="Interchain" evidence="1">
    <location>
        <position position="166"/>
    </location>
</feature>
<feature type="disulfide bond" description="Interchain" evidence="1">
    <location>
        <position position="254"/>
    </location>
</feature>
<evidence type="ECO:0000255" key="1">
    <source>
        <dbReference type="HAMAP-Rule" id="MF_04012"/>
    </source>
</evidence>
<evidence type="ECO:0000256" key="2">
    <source>
        <dbReference type="SAM" id="MobiDB-lite"/>
    </source>
</evidence>
<name>PORTL_HHV2H</name>
<organismHost>
    <name type="scientific">Homo sapiens</name>
    <name type="common">Human</name>
    <dbReference type="NCBI Taxonomy" id="9606"/>
</organismHost>
<dbReference type="EMBL" id="Z86099">
    <property type="protein sequence ID" value="CAB06766.1"/>
    <property type="molecule type" value="Genomic_DNA"/>
</dbReference>
<dbReference type="SMR" id="P89429"/>
<dbReference type="Proteomes" id="UP000001874">
    <property type="component" value="Segment"/>
</dbReference>
<dbReference type="GO" id="GO:0042025">
    <property type="term" value="C:host cell nucleus"/>
    <property type="evidence" value="ECO:0007669"/>
    <property type="project" value="UniProtKB-SubCell"/>
</dbReference>
<dbReference type="GO" id="GO:0044423">
    <property type="term" value="C:virion component"/>
    <property type="evidence" value="ECO:0007669"/>
    <property type="project" value="UniProtKB-KW"/>
</dbReference>
<dbReference type="GO" id="GO:0051276">
    <property type="term" value="P:chromosome organization"/>
    <property type="evidence" value="ECO:0007669"/>
    <property type="project" value="InterPro"/>
</dbReference>
<dbReference type="HAMAP" id="MF_04012">
    <property type="entry name" value="HSV_PORTL"/>
    <property type="match status" value="1"/>
</dbReference>
<dbReference type="InterPro" id="IPR002660">
    <property type="entry name" value="Herpes_Portal"/>
</dbReference>
<dbReference type="Pfam" id="PF01763">
    <property type="entry name" value="Herpes_UL6"/>
    <property type="match status" value="1"/>
</dbReference>
<reference key="1">
    <citation type="journal article" date="1998" name="J. Virol.">
        <title>The genome sequence of herpes simplex virus type 2.</title>
        <authorList>
            <person name="Dolan A."/>
            <person name="Jamieson F.E."/>
            <person name="Cunningham C."/>
            <person name="Barnett B.C."/>
            <person name="McGeoch D.J."/>
        </authorList>
    </citation>
    <scope>NUCLEOTIDE SEQUENCE [LARGE SCALE GENOMIC DNA]</scope>
</reference>
<protein>
    <recommendedName>
        <fullName evidence="1">Portal protein</fullName>
    </recommendedName>
</protein>
<accession>P89429</accession>
<organism>
    <name type="scientific">Human herpesvirus 2 (strain HG52)</name>
    <name type="common">HHV-2</name>
    <name type="synonym">Human herpes simplex virus 2</name>
    <dbReference type="NCBI Taxonomy" id="10315"/>
    <lineage>
        <taxon>Viruses</taxon>
        <taxon>Duplodnaviria</taxon>
        <taxon>Heunggongvirae</taxon>
        <taxon>Peploviricota</taxon>
        <taxon>Herviviricetes</taxon>
        <taxon>Herpesvirales</taxon>
        <taxon>Orthoherpesviridae</taxon>
        <taxon>Alphaherpesvirinae</taxon>
        <taxon>Simplexvirus</taxon>
        <taxon>Simplexvirus humanalpha2</taxon>
        <taxon>Human herpesvirus 2</taxon>
    </lineage>
</organism>